<keyword id="KW-0408">Iron</keyword>
<keyword id="KW-0479">Metal-binding</keyword>
<keyword id="KW-0520">NAD</keyword>
<keyword id="KW-0784">Thiamine biosynthesis</keyword>
<keyword id="KW-0808">Transferase</keyword>
<evidence type="ECO:0000255" key="1">
    <source>
        <dbReference type="HAMAP-Rule" id="MF_00304"/>
    </source>
</evidence>
<name>THI4_METMA</name>
<reference key="1">
    <citation type="journal article" date="2002" name="J. Mol. Microbiol. Biotechnol.">
        <title>The genome of Methanosarcina mazei: evidence for lateral gene transfer between Bacteria and Archaea.</title>
        <authorList>
            <person name="Deppenmeier U."/>
            <person name="Johann A."/>
            <person name="Hartsch T."/>
            <person name="Merkl R."/>
            <person name="Schmitz R.A."/>
            <person name="Martinez-Arias R."/>
            <person name="Henne A."/>
            <person name="Wiezer A."/>
            <person name="Baeumer S."/>
            <person name="Jacobi C."/>
            <person name="Brueggemann H."/>
            <person name="Lienard T."/>
            <person name="Christmann A."/>
            <person name="Boemecke M."/>
            <person name="Steckel S."/>
            <person name="Bhattacharyya A."/>
            <person name="Lykidis A."/>
            <person name="Overbeek R."/>
            <person name="Klenk H.-P."/>
            <person name="Gunsalus R.P."/>
            <person name="Fritz H.-J."/>
            <person name="Gottschalk G."/>
        </authorList>
    </citation>
    <scope>NUCLEOTIDE SEQUENCE [LARGE SCALE GENOMIC DNA]</scope>
    <source>
        <strain>ATCC BAA-159 / DSM 3647 / Goe1 / Go1 / JCM 11833 / OCM 88</strain>
    </source>
</reference>
<proteinExistence type="inferred from homology"/>
<comment type="function">
    <text evidence="1">Involved in the biosynthesis of the thiazole moiety of thiamine. Catalyzes the conversion of NAD and glycine to adenosine diphosphate 5-(2-hydroxyethyl)-4-methylthiazole-2-carboxylate (ADT), an adenylated thiazole intermediate, using free sulfide as a source of sulfur.</text>
</comment>
<comment type="catalytic activity">
    <reaction evidence="1">
        <text>hydrogen sulfide + glycine + NAD(+) = ADP-5-ethyl-4-methylthiazole-2-carboxylate + nicotinamide + 3 H2O + H(+)</text>
        <dbReference type="Rhea" id="RHEA:55704"/>
        <dbReference type="ChEBI" id="CHEBI:15377"/>
        <dbReference type="ChEBI" id="CHEBI:15378"/>
        <dbReference type="ChEBI" id="CHEBI:17154"/>
        <dbReference type="ChEBI" id="CHEBI:29919"/>
        <dbReference type="ChEBI" id="CHEBI:57305"/>
        <dbReference type="ChEBI" id="CHEBI:57540"/>
        <dbReference type="ChEBI" id="CHEBI:139151"/>
        <dbReference type="EC" id="2.4.2.59"/>
    </reaction>
</comment>
<comment type="cofactor">
    <cofactor evidence="1">
        <name>Fe(2+)</name>
        <dbReference type="ChEBI" id="CHEBI:29033"/>
    </cofactor>
</comment>
<comment type="pathway">
    <text evidence="1">Cofactor biosynthesis; thiamine diphosphate biosynthesis.</text>
</comment>
<comment type="subunit">
    <text evidence="1">Homooctamer; tetramer of dimers.</text>
</comment>
<comment type="similarity">
    <text evidence="1">Belongs to the THI4 family.</text>
</comment>
<protein>
    <recommendedName>
        <fullName evidence="1">Thiamine thiazole synthase</fullName>
        <ecNumber evidence="1">2.4.2.59</ecNumber>
    </recommendedName>
</protein>
<organism>
    <name type="scientific">Methanosarcina mazei (strain ATCC BAA-159 / DSM 3647 / Goe1 / Go1 / JCM 11833 / OCM 88)</name>
    <name type="common">Methanosarcina frisia</name>
    <dbReference type="NCBI Taxonomy" id="192952"/>
    <lineage>
        <taxon>Archaea</taxon>
        <taxon>Methanobacteriati</taxon>
        <taxon>Methanobacteriota</taxon>
        <taxon>Stenosarchaea group</taxon>
        <taxon>Methanomicrobia</taxon>
        <taxon>Methanosarcinales</taxon>
        <taxon>Methanosarcinaceae</taxon>
        <taxon>Methanosarcina</taxon>
    </lineage>
</organism>
<gene>
    <name evidence="1" type="primary">thi4</name>
    <name type="ordered locus">MM_0222</name>
</gene>
<sequence length="260" mass="28127">MELDEVIITRAIFEEYSKTFLEYTDIDVALVGGGPANLVAAKYLAEAGAKVAIYEQKLSLGGGMWAGGMMFPRIVVQEEACRVLDDFGIRYKEYEPGYFVANSVESVGKLIAGATSAGAEVFNLVSFEDIMIRENDRVTGIVINWGPVTTQRLHVDPLMIRTKLVIDGTGHDAVVCNTILRKIPNAKIGEFGILGEKPMWSEVGERLAVDATQEIYPGLIVAGMAANAATRAPRMGPVFGGMLLSGEKAAKLALDRLKKI</sequence>
<feature type="chain" id="PRO_0000153948" description="Thiamine thiazole synthase">
    <location>
        <begin position="1"/>
        <end position="260"/>
    </location>
</feature>
<feature type="binding site" description="in other chain" evidence="1">
    <location>
        <position position="36"/>
    </location>
    <ligand>
        <name>NAD(+)</name>
        <dbReference type="ChEBI" id="CHEBI:57540"/>
        <note>ligand shared between two adjacent protomers</note>
    </ligand>
</feature>
<feature type="binding site" description="in other chain" evidence="1">
    <location>
        <begin position="55"/>
        <end position="56"/>
    </location>
    <ligand>
        <name>NAD(+)</name>
        <dbReference type="ChEBI" id="CHEBI:57540"/>
        <note>ligand shared between two adjacent protomers</note>
    </ligand>
</feature>
<feature type="binding site" description="in other chain" evidence="1">
    <location>
        <position position="63"/>
    </location>
    <ligand>
        <name>NAD(+)</name>
        <dbReference type="ChEBI" id="CHEBI:57540"/>
        <note>ligand shared between two adjacent protomers</note>
    </ligand>
</feature>
<feature type="binding site" evidence="1">
    <location>
        <begin position="154"/>
        <end position="156"/>
    </location>
    <ligand>
        <name>NAD(+)</name>
        <dbReference type="ChEBI" id="CHEBI:57540"/>
        <note>ligand shared between two adjacent protomers</note>
    </ligand>
</feature>
<feature type="binding site" evidence="1">
    <location>
        <position position="156"/>
    </location>
    <ligand>
        <name>Fe cation</name>
        <dbReference type="ChEBI" id="CHEBI:24875"/>
        <note>ligand shared between two adjacent protomers</note>
    </ligand>
</feature>
<feature type="binding site" description="in other chain" evidence="1">
    <location>
        <position position="171"/>
    </location>
    <ligand>
        <name>Fe cation</name>
        <dbReference type="ChEBI" id="CHEBI:24875"/>
        <note>ligand shared between two adjacent protomers</note>
    </ligand>
</feature>
<feature type="binding site" description="in other chain" evidence="1">
    <location>
        <position position="224"/>
    </location>
    <ligand>
        <name>NAD(+)</name>
        <dbReference type="ChEBI" id="CHEBI:57540"/>
        <note>ligand shared between two adjacent protomers</note>
    </ligand>
</feature>
<feature type="binding site" evidence="1">
    <location>
        <position position="234"/>
    </location>
    <ligand>
        <name>glycine</name>
        <dbReference type="ChEBI" id="CHEBI:57305"/>
    </ligand>
</feature>
<dbReference type="EC" id="2.4.2.59" evidence="1"/>
<dbReference type="EMBL" id="AE008384">
    <property type="protein sequence ID" value="AAM29918.1"/>
    <property type="molecule type" value="Genomic_DNA"/>
</dbReference>
<dbReference type="RefSeq" id="WP_011032176.1">
    <property type="nucleotide sequence ID" value="NC_003901.1"/>
</dbReference>
<dbReference type="SMR" id="Q8Q0B5"/>
<dbReference type="KEGG" id="mma:MM_0222"/>
<dbReference type="PATRIC" id="fig|192952.21.peg.270"/>
<dbReference type="eggNOG" id="arCOG00574">
    <property type="taxonomic scope" value="Archaea"/>
</dbReference>
<dbReference type="HOGENOM" id="CLU_053727_2_0_2"/>
<dbReference type="UniPathway" id="UPA00060"/>
<dbReference type="Proteomes" id="UP000000595">
    <property type="component" value="Chromosome"/>
</dbReference>
<dbReference type="GO" id="GO:0005506">
    <property type="term" value="F:iron ion binding"/>
    <property type="evidence" value="ECO:0007669"/>
    <property type="project" value="UniProtKB-UniRule"/>
</dbReference>
<dbReference type="GO" id="GO:0016763">
    <property type="term" value="F:pentosyltransferase activity"/>
    <property type="evidence" value="ECO:0007669"/>
    <property type="project" value="UniProtKB-UniRule"/>
</dbReference>
<dbReference type="GO" id="GO:0009228">
    <property type="term" value="P:thiamine biosynthetic process"/>
    <property type="evidence" value="ECO:0007669"/>
    <property type="project" value="UniProtKB-KW"/>
</dbReference>
<dbReference type="GO" id="GO:0009229">
    <property type="term" value="P:thiamine diphosphate biosynthetic process"/>
    <property type="evidence" value="ECO:0007669"/>
    <property type="project" value="UniProtKB-UniRule"/>
</dbReference>
<dbReference type="GO" id="GO:0052837">
    <property type="term" value="P:thiazole biosynthetic process"/>
    <property type="evidence" value="ECO:0007669"/>
    <property type="project" value="UniProtKB-UniRule"/>
</dbReference>
<dbReference type="Gene3D" id="3.50.50.60">
    <property type="entry name" value="FAD/NAD(P)-binding domain"/>
    <property type="match status" value="1"/>
</dbReference>
<dbReference type="HAMAP" id="MF_00304">
    <property type="entry name" value="Thi4"/>
    <property type="match status" value="1"/>
</dbReference>
<dbReference type="InterPro" id="IPR036188">
    <property type="entry name" value="FAD/NAD-bd_sf"/>
</dbReference>
<dbReference type="InterPro" id="IPR002922">
    <property type="entry name" value="Thi4_fam"/>
</dbReference>
<dbReference type="InterPro" id="IPR022828">
    <property type="entry name" value="Thi4_prok"/>
</dbReference>
<dbReference type="NCBIfam" id="TIGR00292">
    <property type="entry name" value="sulfide-dependent adenosine diphosphate thiazole synthase"/>
    <property type="match status" value="1"/>
</dbReference>
<dbReference type="PANTHER" id="PTHR43422">
    <property type="entry name" value="THIAMINE THIAZOLE SYNTHASE"/>
    <property type="match status" value="1"/>
</dbReference>
<dbReference type="PANTHER" id="PTHR43422:SF3">
    <property type="entry name" value="THIAMINE THIAZOLE SYNTHASE"/>
    <property type="match status" value="1"/>
</dbReference>
<dbReference type="Pfam" id="PF01946">
    <property type="entry name" value="Thi4"/>
    <property type="match status" value="1"/>
</dbReference>
<dbReference type="PRINTS" id="PR00419">
    <property type="entry name" value="ADXRDTASE"/>
</dbReference>
<dbReference type="SUPFAM" id="SSF51905">
    <property type="entry name" value="FAD/NAD(P)-binding domain"/>
    <property type="match status" value="1"/>
</dbReference>
<accession>Q8Q0B5</accession>